<dbReference type="EC" id="2.2.1.7" evidence="1"/>
<dbReference type="EMBL" id="CP000089">
    <property type="protein sequence ID" value="AAZ47791.1"/>
    <property type="molecule type" value="Genomic_DNA"/>
</dbReference>
<dbReference type="SMR" id="Q47BJ0"/>
<dbReference type="STRING" id="159087.Daro_3061"/>
<dbReference type="KEGG" id="dar:Daro_3061"/>
<dbReference type="eggNOG" id="COG1154">
    <property type="taxonomic scope" value="Bacteria"/>
</dbReference>
<dbReference type="HOGENOM" id="CLU_009227_1_4_4"/>
<dbReference type="OrthoDB" id="9803371at2"/>
<dbReference type="UniPathway" id="UPA00064">
    <property type="reaction ID" value="UER00091"/>
</dbReference>
<dbReference type="GO" id="GO:0005829">
    <property type="term" value="C:cytosol"/>
    <property type="evidence" value="ECO:0007669"/>
    <property type="project" value="TreeGrafter"/>
</dbReference>
<dbReference type="GO" id="GO:0008661">
    <property type="term" value="F:1-deoxy-D-xylulose-5-phosphate synthase activity"/>
    <property type="evidence" value="ECO:0007669"/>
    <property type="project" value="UniProtKB-UniRule"/>
</dbReference>
<dbReference type="GO" id="GO:0000287">
    <property type="term" value="F:magnesium ion binding"/>
    <property type="evidence" value="ECO:0007669"/>
    <property type="project" value="UniProtKB-UniRule"/>
</dbReference>
<dbReference type="GO" id="GO:0030976">
    <property type="term" value="F:thiamine pyrophosphate binding"/>
    <property type="evidence" value="ECO:0007669"/>
    <property type="project" value="UniProtKB-UniRule"/>
</dbReference>
<dbReference type="GO" id="GO:0052865">
    <property type="term" value="P:1-deoxy-D-xylulose 5-phosphate biosynthetic process"/>
    <property type="evidence" value="ECO:0007669"/>
    <property type="project" value="UniProtKB-UniPathway"/>
</dbReference>
<dbReference type="GO" id="GO:0019288">
    <property type="term" value="P:isopentenyl diphosphate biosynthetic process, methylerythritol 4-phosphate pathway"/>
    <property type="evidence" value="ECO:0007669"/>
    <property type="project" value="TreeGrafter"/>
</dbReference>
<dbReference type="GO" id="GO:0016114">
    <property type="term" value="P:terpenoid biosynthetic process"/>
    <property type="evidence" value="ECO:0007669"/>
    <property type="project" value="UniProtKB-UniRule"/>
</dbReference>
<dbReference type="GO" id="GO:0009228">
    <property type="term" value="P:thiamine biosynthetic process"/>
    <property type="evidence" value="ECO:0007669"/>
    <property type="project" value="UniProtKB-UniRule"/>
</dbReference>
<dbReference type="CDD" id="cd02007">
    <property type="entry name" value="TPP_DXS"/>
    <property type="match status" value="1"/>
</dbReference>
<dbReference type="CDD" id="cd07033">
    <property type="entry name" value="TPP_PYR_DXS_TK_like"/>
    <property type="match status" value="1"/>
</dbReference>
<dbReference type="FunFam" id="3.40.50.920:FF:000002">
    <property type="entry name" value="1-deoxy-D-xylulose-5-phosphate synthase"/>
    <property type="match status" value="1"/>
</dbReference>
<dbReference type="FunFam" id="3.40.50.970:FF:000005">
    <property type="entry name" value="1-deoxy-D-xylulose-5-phosphate synthase"/>
    <property type="match status" value="1"/>
</dbReference>
<dbReference type="Gene3D" id="3.40.50.920">
    <property type="match status" value="1"/>
</dbReference>
<dbReference type="Gene3D" id="3.40.50.970">
    <property type="match status" value="2"/>
</dbReference>
<dbReference type="HAMAP" id="MF_00315">
    <property type="entry name" value="DXP_synth"/>
    <property type="match status" value="1"/>
</dbReference>
<dbReference type="InterPro" id="IPR005477">
    <property type="entry name" value="Dxylulose-5-P_synthase"/>
</dbReference>
<dbReference type="InterPro" id="IPR029061">
    <property type="entry name" value="THDP-binding"/>
</dbReference>
<dbReference type="InterPro" id="IPR009014">
    <property type="entry name" value="Transketo_C/PFOR_II"/>
</dbReference>
<dbReference type="InterPro" id="IPR005475">
    <property type="entry name" value="Transketolase-like_Pyr-bd"/>
</dbReference>
<dbReference type="InterPro" id="IPR033248">
    <property type="entry name" value="Transketolase_C"/>
</dbReference>
<dbReference type="InterPro" id="IPR049557">
    <property type="entry name" value="Transketolase_CS"/>
</dbReference>
<dbReference type="NCBIfam" id="TIGR00204">
    <property type="entry name" value="dxs"/>
    <property type="match status" value="1"/>
</dbReference>
<dbReference type="NCBIfam" id="NF003933">
    <property type="entry name" value="PRK05444.2-2"/>
    <property type="match status" value="1"/>
</dbReference>
<dbReference type="PANTHER" id="PTHR43322">
    <property type="entry name" value="1-D-DEOXYXYLULOSE 5-PHOSPHATE SYNTHASE-RELATED"/>
    <property type="match status" value="1"/>
</dbReference>
<dbReference type="PANTHER" id="PTHR43322:SF5">
    <property type="entry name" value="1-DEOXY-D-XYLULOSE-5-PHOSPHATE SYNTHASE, CHLOROPLASTIC"/>
    <property type="match status" value="1"/>
</dbReference>
<dbReference type="Pfam" id="PF13292">
    <property type="entry name" value="DXP_synthase_N"/>
    <property type="match status" value="1"/>
</dbReference>
<dbReference type="Pfam" id="PF02779">
    <property type="entry name" value="Transket_pyr"/>
    <property type="match status" value="1"/>
</dbReference>
<dbReference type="Pfam" id="PF02780">
    <property type="entry name" value="Transketolase_C"/>
    <property type="match status" value="1"/>
</dbReference>
<dbReference type="SMART" id="SM00861">
    <property type="entry name" value="Transket_pyr"/>
    <property type="match status" value="1"/>
</dbReference>
<dbReference type="SUPFAM" id="SSF52518">
    <property type="entry name" value="Thiamin diphosphate-binding fold (THDP-binding)"/>
    <property type="match status" value="2"/>
</dbReference>
<dbReference type="SUPFAM" id="SSF52922">
    <property type="entry name" value="TK C-terminal domain-like"/>
    <property type="match status" value="1"/>
</dbReference>
<dbReference type="PROSITE" id="PS00801">
    <property type="entry name" value="TRANSKETOLASE_1"/>
    <property type="match status" value="1"/>
</dbReference>
<sequence length="618" mass="66183">MTASRLLETINSPADLRRLDRKQLPQLASELRAFLIDSVSKTGGHLSSNLGTVELTIALHAVFNTPEDRLVWDVGHQCYAHKVLTGRREGMSTLRMHGGVSGFPKRAESPYDTFGVGHSSTSISAALGMALAAKHKGEDRKAIAIIGDGAMSAGMAFEAMNNAGVADADMLVILNDNEMSISPPVGALNNILTRLTSSKTYNVAREAGRHMLGFAPPLLELARRAEEHVKGMIAPGTLFEEFGFHYYGPIDGHDLDALIPTLENLKKLKGPKFLHVITKKGQGYKLAENDPILYHGVGKFAACDGIQSAKGPAKLTYTQVFGDWLCDMAKADSRLVGITPAMREGSGMVRFSAEHADRYFDVGIAEQHAVTFAAGLACEGLKPVVAIYSTFLQRGYDQLVHDVALQNLPVIFAVDRGGLVGADGPTHHGTFDLSFVTCIPNMTVMAPADEAECRKMLSTAMTIDGPSMVRYPRGSGTGTIPEAKLDTLPVGKGDIRRRGKDIALLAFGSLVAAAVAAGEELDATVANMRFIKPLDADLIVELAGNHSLLVSIEENAVIGGAGSEIERVLAERGLQVPVLRLGLPDRFIDHGEQGQLLAELGLDKEGIVRAVRARTNPQ</sequence>
<keyword id="KW-0414">Isoprene biosynthesis</keyword>
<keyword id="KW-0460">Magnesium</keyword>
<keyword id="KW-0479">Metal-binding</keyword>
<keyword id="KW-0784">Thiamine biosynthesis</keyword>
<keyword id="KW-0786">Thiamine pyrophosphate</keyword>
<keyword id="KW-0808">Transferase</keyword>
<name>DXS_DECAR</name>
<gene>
    <name evidence="1" type="primary">dxs</name>
    <name type="ordered locus">Daro_3061</name>
</gene>
<proteinExistence type="inferred from homology"/>
<accession>Q47BJ0</accession>
<feature type="chain" id="PRO_0000256407" description="1-deoxy-D-xylulose-5-phosphate synthase">
    <location>
        <begin position="1"/>
        <end position="618"/>
    </location>
</feature>
<feature type="binding site" evidence="1">
    <location>
        <position position="76"/>
    </location>
    <ligand>
        <name>thiamine diphosphate</name>
        <dbReference type="ChEBI" id="CHEBI:58937"/>
    </ligand>
</feature>
<feature type="binding site" evidence="1">
    <location>
        <begin position="117"/>
        <end position="119"/>
    </location>
    <ligand>
        <name>thiamine diphosphate</name>
        <dbReference type="ChEBI" id="CHEBI:58937"/>
    </ligand>
</feature>
<feature type="binding site" evidence="1">
    <location>
        <position position="148"/>
    </location>
    <ligand>
        <name>Mg(2+)</name>
        <dbReference type="ChEBI" id="CHEBI:18420"/>
    </ligand>
</feature>
<feature type="binding site" evidence="1">
    <location>
        <begin position="149"/>
        <end position="150"/>
    </location>
    <ligand>
        <name>thiamine diphosphate</name>
        <dbReference type="ChEBI" id="CHEBI:58937"/>
    </ligand>
</feature>
<feature type="binding site" evidence="1">
    <location>
        <position position="177"/>
    </location>
    <ligand>
        <name>Mg(2+)</name>
        <dbReference type="ChEBI" id="CHEBI:18420"/>
    </ligand>
</feature>
<feature type="binding site" evidence="1">
    <location>
        <position position="177"/>
    </location>
    <ligand>
        <name>thiamine diphosphate</name>
        <dbReference type="ChEBI" id="CHEBI:58937"/>
    </ligand>
</feature>
<feature type="binding site" evidence="1">
    <location>
        <position position="284"/>
    </location>
    <ligand>
        <name>thiamine diphosphate</name>
        <dbReference type="ChEBI" id="CHEBI:58937"/>
    </ligand>
</feature>
<feature type="binding site" evidence="1">
    <location>
        <position position="366"/>
    </location>
    <ligand>
        <name>thiamine diphosphate</name>
        <dbReference type="ChEBI" id="CHEBI:58937"/>
    </ligand>
</feature>
<comment type="function">
    <text evidence="1">Catalyzes the acyloin condensation reaction between C atoms 2 and 3 of pyruvate and glyceraldehyde 3-phosphate to yield 1-deoxy-D-xylulose-5-phosphate (DXP).</text>
</comment>
<comment type="catalytic activity">
    <reaction evidence="1">
        <text>D-glyceraldehyde 3-phosphate + pyruvate + H(+) = 1-deoxy-D-xylulose 5-phosphate + CO2</text>
        <dbReference type="Rhea" id="RHEA:12605"/>
        <dbReference type="ChEBI" id="CHEBI:15361"/>
        <dbReference type="ChEBI" id="CHEBI:15378"/>
        <dbReference type="ChEBI" id="CHEBI:16526"/>
        <dbReference type="ChEBI" id="CHEBI:57792"/>
        <dbReference type="ChEBI" id="CHEBI:59776"/>
        <dbReference type="EC" id="2.2.1.7"/>
    </reaction>
</comment>
<comment type="cofactor">
    <cofactor evidence="1">
        <name>Mg(2+)</name>
        <dbReference type="ChEBI" id="CHEBI:18420"/>
    </cofactor>
    <text evidence="1">Binds 1 Mg(2+) ion per subunit.</text>
</comment>
<comment type="cofactor">
    <cofactor evidence="1">
        <name>thiamine diphosphate</name>
        <dbReference type="ChEBI" id="CHEBI:58937"/>
    </cofactor>
    <text evidence="1">Binds 1 thiamine pyrophosphate per subunit.</text>
</comment>
<comment type="pathway">
    <text evidence="1">Metabolic intermediate biosynthesis; 1-deoxy-D-xylulose 5-phosphate biosynthesis; 1-deoxy-D-xylulose 5-phosphate from D-glyceraldehyde 3-phosphate and pyruvate: step 1/1.</text>
</comment>
<comment type="subunit">
    <text evidence="1">Homodimer.</text>
</comment>
<comment type="similarity">
    <text evidence="1">Belongs to the transketolase family. DXPS subfamily.</text>
</comment>
<organism>
    <name type="scientific">Dechloromonas aromatica (strain RCB)</name>
    <dbReference type="NCBI Taxonomy" id="159087"/>
    <lineage>
        <taxon>Bacteria</taxon>
        <taxon>Pseudomonadati</taxon>
        <taxon>Pseudomonadota</taxon>
        <taxon>Betaproteobacteria</taxon>
        <taxon>Rhodocyclales</taxon>
        <taxon>Azonexaceae</taxon>
        <taxon>Dechloromonas</taxon>
    </lineage>
</organism>
<reference key="1">
    <citation type="journal article" date="2009" name="BMC Genomics">
        <title>Metabolic analysis of the soil microbe Dechloromonas aromatica str. RCB: indications of a surprisingly complex life-style and cryptic anaerobic pathways for aromatic degradation.</title>
        <authorList>
            <person name="Salinero K.K."/>
            <person name="Keller K."/>
            <person name="Feil W.S."/>
            <person name="Feil H."/>
            <person name="Trong S."/>
            <person name="Di Bartolo G."/>
            <person name="Lapidus A."/>
        </authorList>
    </citation>
    <scope>NUCLEOTIDE SEQUENCE [LARGE SCALE GENOMIC DNA]</scope>
    <source>
        <strain>RCB</strain>
    </source>
</reference>
<evidence type="ECO:0000255" key="1">
    <source>
        <dbReference type="HAMAP-Rule" id="MF_00315"/>
    </source>
</evidence>
<protein>
    <recommendedName>
        <fullName evidence="1">1-deoxy-D-xylulose-5-phosphate synthase</fullName>
        <ecNumber evidence="1">2.2.1.7</ecNumber>
    </recommendedName>
    <alternativeName>
        <fullName evidence="1">1-deoxyxylulose-5-phosphate synthase</fullName>
        <shortName evidence="1">DXP synthase</shortName>
        <shortName evidence="1">DXPS</shortName>
    </alternativeName>
</protein>